<name>MTRA_METMP</name>
<gene>
    <name evidence="1" type="primary">mtrA</name>
    <name type="ordered locus">MMP1564</name>
</gene>
<dbReference type="EC" id="7.2.1.4" evidence="1"/>
<dbReference type="EMBL" id="BX950229">
    <property type="protein sequence ID" value="CAF31120.1"/>
    <property type="molecule type" value="Genomic_DNA"/>
</dbReference>
<dbReference type="RefSeq" id="WP_011171508.1">
    <property type="nucleotide sequence ID" value="NC_005791.1"/>
</dbReference>
<dbReference type="SMR" id="Q6LWZ0"/>
<dbReference type="STRING" id="267377.MMP1564"/>
<dbReference type="EnsemblBacteria" id="CAF31120">
    <property type="protein sequence ID" value="CAF31120"/>
    <property type="gene ID" value="MMP1564"/>
</dbReference>
<dbReference type="GeneID" id="2761895"/>
<dbReference type="KEGG" id="mmp:MMP1564"/>
<dbReference type="PATRIC" id="fig|267377.15.peg.1602"/>
<dbReference type="eggNOG" id="arCOG03221">
    <property type="taxonomic scope" value="Archaea"/>
</dbReference>
<dbReference type="HOGENOM" id="CLU_100863_0_0_2"/>
<dbReference type="OrthoDB" id="130682at2157"/>
<dbReference type="UniPathway" id="UPA00640">
    <property type="reaction ID" value="UER00698"/>
</dbReference>
<dbReference type="Proteomes" id="UP000000590">
    <property type="component" value="Chromosome"/>
</dbReference>
<dbReference type="GO" id="GO:0005886">
    <property type="term" value="C:plasma membrane"/>
    <property type="evidence" value="ECO:0007669"/>
    <property type="project" value="UniProtKB-SubCell"/>
</dbReference>
<dbReference type="GO" id="GO:0050897">
    <property type="term" value="F:cobalt ion binding"/>
    <property type="evidence" value="ECO:0007669"/>
    <property type="project" value="InterPro"/>
</dbReference>
<dbReference type="GO" id="GO:0030269">
    <property type="term" value="F:tetrahydromethanopterin S-methyltransferase activity"/>
    <property type="evidence" value="ECO:0007669"/>
    <property type="project" value="UniProtKB-UniRule"/>
</dbReference>
<dbReference type="GO" id="GO:0019386">
    <property type="term" value="P:methanogenesis, from carbon dioxide"/>
    <property type="evidence" value="ECO:0007669"/>
    <property type="project" value="UniProtKB-UniRule"/>
</dbReference>
<dbReference type="GO" id="GO:0032259">
    <property type="term" value="P:methylation"/>
    <property type="evidence" value="ECO:0007669"/>
    <property type="project" value="UniProtKB-KW"/>
</dbReference>
<dbReference type="GO" id="GO:0006730">
    <property type="term" value="P:one-carbon metabolic process"/>
    <property type="evidence" value="ECO:0007669"/>
    <property type="project" value="UniProtKB-UniRule"/>
</dbReference>
<dbReference type="HAMAP" id="MF_01093">
    <property type="entry name" value="MtrA"/>
    <property type="match status" value="1"/>
</dbReference>
<dbReference type="InterPro" id="IPR030688">
    <property type="entry name" value="MeTrfase_MtrA/MtxA"/>
</dbReference>
<dbReference type="InterPro" id="IPR005778">
    <property type="entry name" value="MtrA"/>
</dbReference>
<dbReference type="NCBIfam" id="TIGR01111">
    <property type="entry name" value="mtrA"/>
    <property type="match status" value="1"/>
</dbReference>
<dbReference type="NCBIfam" id="NF002126">
    <property type="entry name" value="PRK00964.1-4"/>
    <property type="match status" value="1"/>
</dbReference>
<dbReference type="Pfam" id="PF04208">
    <property type="entry name" value="MtrA"/>
    <property type="match status" value="1"/>
</dbReference>
<dbReference type="PIRSF" id="PIRSF500207">
    <property type="entry name" value="MtrA"/>
    <property type="match status" value="1"/>
</dbReference>
<dbReference type="PIRSF" id="PIRSF009452">
    <property type="entry name" value="MtrA_MtxA"/>
    <property type="match status" value="1"/>
</dbReference>
<protein>
    <recommendedName>
        <fullName evidence="1">Tetrahydromethanopterin S-methyltransferase subunit A</fullName>
        <ecNumber evidence="1">7.2.1.4</ecNumber>
    </recommendedName>
    <alternativeName>
        <fullName evidence="1">N5-methyltetrahydromethanopterin--coenzyme M methyltransferase subunit A</fullName>
    </alternativeName>
</protein>
<comment type="function">
    <text evidence="1">Part of a complex that catalyzes the formation of methyl-coenzyme M and tetrahydromethanopterin from coenzyme M and methyl-tetrahydromethanopterin. This is an energy-conserving, sodium-ion translocating step.</text>
</comment>
<comment type="catalytic activity">
    <reaction evidence="1">
        <text>5-methyl-5,6,7,8-tetrahydromethanopterin + coenzyme M + 2 Na(+)(in) = 5,6,7,8-tetrahydromethanopterin + methyl-coenzyme M + 2 Na(+)(out)</text>
        <dbReference type="Rhea" id="RHEA:53492"/>
        <dbReference type="ChEBI" id="CHEBI:29101"/>
        <dbReference type="ChEBI" id="CHEBI:58103"/>
        <dbReference type="ChEBI" id="CHEBI:58116"/>
        <dbReference type="ChEBI" id="CHEBI:58286"/>
        <dbReference type="ChEBI" id="CHEBI:58319"/>
        <dbReference type="EC" id="7.2.1.4"/>
    </reaction>
</comment>
<comment type="cofactor">
    <cofactor evidence="1">
        <name>5-hydroxybenzimidazolylcob(I)amide</name>
        <dbReference type="ChEBI" id="CHEBI:60494"/>
    </cofactor>
    <text evidence="1">Binds 1 5-hydroxybenzimidazolylcobamide group.</text>
</comment>
<comment type="pathway">
    <text evidence="1">One-carbon metabolism; methanogenesis from CO(2); methyl-coenzyme M from 5,10-methylene-5,6,7,8-tetrahydromethanopterin: step 2/2.</text>
</comment>
<comment type="subunit">
    <text evidence="1">The complex is composed of 8 subunits; MtrA, MtrB, MtrC, MtrD, MtrE, MtrF, MtrG and MtrH.</text>
</comment>
<comment type="subcellular location">
    <subcellularLocation>
        <location evidence="1">Cell membrane</location>
        <topology evidence="1">Single-pass membrane protein</topology>
    </subcellularLocation>
</comment>
<comment type="similarity">
    <text evidence="1">Belongs to the MtrA family.</text>
</comment>
<proteinExistence type="inferred from homology"/>
<accession>Q6LWZ0</accession>
<keyword id="KW-1003">Cell membrane</keyword>
<keyword id="KW-0170">Cobalt</keyword>
<keyword id="KW-0472">Membrane</keyword>
<keyword id="KW-0484">Methanogenesis</keyword>
<keyword id="KW-0489">Methyltransferase</keyword>
<keyword id="KW-0554">One-carbon metabolism</keyword>
<keyword id="KW-1185">Reference proteome</keyword>
<keyword id="KW-0808">Transferase</keyword>
<keyword id="KW-1278">Translocase</keyword>
<keyword id="KW-0812">Transmembrane</keyword>
<keyword id="KW-1133">Transmembrane helix</keyword>
<reference key="1">
    <citation type="journal article" date="2004" name="J. Bacteriol.">
        <title>Complete genome sequence of the genetically tractable hydrogenotrophic methanogen Methanococcus maripaludis.</title>
        <authorList>
            <person name="Hendrickson E.L."/>
            <person name="Kaul R."/>
            <person name="Zhou Y."/>
            <person name="Bovee D."/>
            <person name="Chapman P."/>
            <person name="Chung J."/>
            <person name="Conway de Macario E."/>
            <person name="Dodsworth J.A."/>
            <person name="Gillett W."/>
            <person name="Graham D.E."/>
            <person name="Hackett M."/>
            <person name="Haydock A.K."/>
            <person name="Kang A."/>
            <person name="Land M.L."/>
            <person name="Levy R."/>
            <person name="Lie T.J."/>
            <person name="Major T.A."/>
            <person name="Moore B.C."/>
            <person name="Porat I."/>
            <person name="Palmeiri A."/>
            <person name="Rouse G."/>
            <person name="Saenphimmachak C."/>
            <person name="Soell D."/>
            <person name="Van Dien S."/>
            <person name="Wang T."/>
            <person name="Whitman W.B."/>
            <person name="Xia Q."/>
            <person name="Zhang Y."/>
            <person name="Larimer F.W."/>
            <person name="Olson M.V."/>
            <person name="Leigh J.A."/>
        </authorList>
    </citation>
    <scope>NUCLEOTIDE SEQUENCE [LARGE SCALE GENOMIC DNA]</scope>
    <source>
        <strain>DSM 14266 / JCM 13030 / NBRC 101832 / S2 / LL</strain>
    </source>
</reference>
<organism>
    <name type="scientific">Methanococcus maripaludis (strain DSM 14266 / JCM 13030 / NBRC 101832 / S2 / LL)</name>
    <dbReference type="NCBI Taxonomy" id="267377"/>
    <lineage>
        <taxon>Archaea</taxon>
        <taxon>Methanobacteriati</taxon>
        <taxon>Methanobacteriota</taxon>
        <taxon>Methanomada group</taxon>
        <taxon>Methanococci</taxon>
        <taxon>Methanococcales</taxon>
        <taxon>Methanococcaceae</taxon>
        <taxon>Methanococcus</taxon>
    </lineage>
</organism>
<feature type="chain" id="PRO_0000147506" description="Tetrahydromethanopterin S-methyltransferase subunit A">
    <location>
        <begin position="1"/>
        <end position="239"/>
    </location>
</feature>
<feature type="topological domain" description="Cytoplasmic" evidence="1">
    <location>
        <begin position="1"/>
        <end position="215"/>
    </location>
</feature>
<feature type="transmembrane region" description="Helical" evidence="1">
    <location>
        <begin position="216"/>
        <end position="238"/>
    </location>
</feature>
<feature type="topological domain" description="Extracellular" evidence="1">
    <location>
        <position position="239"/>
    </location>
</feature>
<feature type="binding site" evidence="1">
    <location>
        <position position="85"/>
    </location>
    <ligand>
        <name>5-hydroxybenzimidazolylcob(I)amide</name>
        <dbReference type="ChEBI" id="CHEBI:60494"/>
        <note>cofactor</note>
    </ligand>
</feature>
<sequence>MADKKAPAAGWPVANGEYVVGNPESCVAVVTLGSHGLDQAAIDAGAAISGPCHTENLGIEKVVANYISNPNIRFMVITGSEVQGHITGQCIKALYENGIGDDGGIIGAKGAIPFMENVGTEPVGRLQSQIVECIDLIDVEDTGKISDAIKNCISKDPGAFEEEPMVIELEGGAAAAGEESTSIKPTSPEMALLEARMRIVSEKMNEAAMIAKFNSGYYNGKIQGIAIGLFLSIVIFSLL</sequence>
<evidence type="ECO:0000255" key="1">
    <source>
        <dbReference type="HAMAP-Rule" id="MF_01093"/>
    </source>
</evidence>